<reference key="1">
    <citation type="journal article" date="2004" name="Nat. Genet.">
        <title>Complete sequencing and characterization of 21,243 full-length human cDNAs.</title>
        <authorList>
            <person name="Ota T."/>
            <person name="Suzuki Y."/>
            <person name="Nishikawa T."/>
            <person name="Otsuki T."/>
            <person name="Sugiyama T."/>
            <person name="Irie R."/>
            <person name="Wakamatsu A."/>
            <person name="Hayashi K."/>
            <person name="Sato H."/>
            <person name="Nagai K."/>
            <person name="Kimura K."/>
            <person name="Makita H."/>
            <person name="Sekine M."/>
            <person name="Obayashi M."/>
            <person name="Nishi T."/>
            <person name="Shibahara T."/>
            <person name="Tanaka T."/>
            <person name="Ishii S."/>
            <person name="Yamamoto J."/>
            <person name="Saito K."/>
            <person name="Kawai Y."/>
            <person name="Isono Y."/>
            <person name="Nakamura Y."/>
            <person name="Nagahari K."/>
            <person name="Murakami K."/>
            <person name="Yasuda T."/>
            <person name="Iwayanagi T."/>
            <person name="Wagatsuma M."/>
            <person name="Shiratori A."/>
            <person name="Sudo H."/>
            <person name="Hosoiri T."/>
            <person name="Kaku Y."/>
            <person name="Kodaira H."/>
            <person name="Kondo H."/>
            <person name="Sugawara M."/>
            <person name="Takahashi M."/>
            <person name="Kanda K."/>
            <person name="Yokoi T."/>
            <person name="Furuya T."/>
            <person name="Kikkawa E."/>
            <person name="Omura Y."/>
            <person name="Abe K."/>
            <person name="Kamihara K."/>
            <person name="Katsuta N."/>
            <person name="Sato K."/>
            <person name="Tanikawa M."/>
            <person name="Yamazaki M."/>
            <person name="Ninomiya K."/>
            <person name="Ishibashi T."/>
            <person name="Yamashita H."/>
            <person name="Murakawa K."/>
            <person name="Fujimori K."/>
            <person name="Tanai H."/>
            <person name="Kimata M."/>
            <person name="Watanabe M."/>
            <person name="Hiraoka S."/>
            <person name="Chiba Y."/>
            <person name="Ishida S."/>
            <person name="Ono Y."/>
            <person name="Takiguchi S."/>
            <person name="Watanabe S."/>
            <person name="Yosida M."/>
            <person name="Hotuta T."/>
            <person name="Kusano J."/>
            <person name="Kanehori K."/>
            <person name="Takahashi-Fujii A."/>
            <person name="Hara H."/>
            <person name="Tanase T.-O."/>
            <person name="Nomura Y."/>
            <person name="Togiya S."/>
            <person name="Komai F."/>
            <person name="Hara R."/>
            <person name="Takeuchi K."/>
            <person name="Arita M."/>
            <person name="Imose N."/>
            <person name="Musashino K."/>
            <person name="Yuuki H."/>
            <person name="Oshima A."/>
            <person name="Sasaki N."/>
            <person name="Aotsuka S."/>
            <person name="Yoshikawa Y."/>
            <person name="Matsunawa H."/>
            <person name="Ichihara T."/>
            <person name="Shiohata N."/>
            <person name="Sano S."/>
            <person name="Moriya S."/>
            <person name="Momiyama H."/>
            <person name="Satoh N."/>
            <person name="Takami S."/>
            <person name="Terashima Y."/>
            <person name="Suzuki O."/>
            <person name="Nakagawa S."/>
            <person name="Senoh A."/>
            <person name="Mizoguchi H."/>
            <person name="Goto Y."/>
            <person name="Shimizu F."/>
            <person name="Wakebe H."/>
            <person name="Hishigaki H."/>
            <person name="Watanabe T."/>
            <person name="Sugiyama A."/>
            <person name="Takemoto M."/>
            <person name="Kawakami B."/>
            <person name="Yamazaki M."/>
            <person name="Watanabe K."/>
            <person name="Kumagai A."/>
            <person name="Itakura S."/>
            <person name="Fukuzumi Y."/>
            <person name="Fujimori Y."/>
            <person name="Komiyama M."/>
            <person name="Tashiro H."/>
            <person name="Tanigami A."/>
            <person name="Fujiwara T."/>
            <person name="Ono T."/>
            <person name="Yamada K."/>
            <person name="Fujii Y."/>
            <person name="Ozaki K."/>
            <person name="Hirao M."/>
            <person name="Ohmori Y."/>
            <person name="Kawabata A."/>
            <person name="Hikiji T."/>
            <person name="Kobatake N."/>
            <person name="Inagaki H."/>
            <person name="Ikema Y."/>
            <person name="Okamoto S."/>
            <person name="Okitani R."/>
            <person name="Kawakami T."/>
            <person name="Noguchi S."/>
            <person name="Itoh T."/>
            <person name="Shigeta K."/>
            <person name="Senba T."/>
            <person name="Matsumura K."/>
            <person name="Nakajima Y."/>
            <person name="Mizuno T."/>
            <person name="Morinaga M."/>
            <person name="Sasaki M."/>
            <person name="Togashi T."/>
            <person name="Oyama M."/>
            <person name="Hata H."/>
            <person name="Watanabe M."/>
            <person name="Komatsu T."/>
            <person name="Mizushima-Sugano J."/>
            <person name="Satoh T."/>
            <person name="Shirai Y."/>
            <person name="Takahashi Y."/>
            <person name="Nakagawa K."/>
            <person name="Okumura K."/>
            <person name="Nagase T."/>
            <person name="Nomura N."/>
            <person name="Kikuchi H."/>
            <person name="Masuho Y."/>
            <person name="Yamashita R."/>
            <person name="Nakai K."/>
            <person name="Yada T."/>
            <person name="Nakamura Y."/>
            <person name="Ohara O."/>
            <person name="Isogai T."/>
            <person name="Sugano S."/>
        </authorList>
    </citation>
    <scope>NUCLEOTIDE SEQUENCE [LARGE SCALE MRNA] (ISOFORMS 1 AND 2)</scope>
    <source>
        <tissue>Kidney</tissue>
        <tissue>Testis</tissue>
    </source>
</reference>
<reference key="2">
    <citation type="journal article" date="2004" name="Nature">
        <title>The DNA sequence and biology of human chromosome 19.</title>
        <authorList>
            <person name="Grimwood J."/>
            <person name="Gordon L.A."/>
            <person name="Olsen A.S."/>
            <person name="Terry A."/>
            <person name="Schmutz J."/>
            <person name="Lamerdin J.E."/>
            <person name="Hellsten U."/>
            <person name="Goodstein D."/>
            <person name="Couronne O."/>
            <person name="Tran-Gyamfi M."/>
            <person name="Aerts A."/>
            <person name="Altherr M."/>
            <person name="Ashworth L."/>
            <person name="Bajorek E."/>
            <person name="Black S."/>
            <person name="Branscomb E."/>
            <person name="Caenepeel S."/>
            <person name="Carrano A.V."/>
            <person name="Caoile C."/>
            <person name="Chan Y.M."/>
            <person name="Christensen M."/>
            <person name="Cleland C.A."/>
            <person name="Copeland A."/>
            <person name="Dalin E."/>
            <person name="Dehal P."/>
            <person name="Denys M."/>
            <person name="Detter J.C."/>
            <person name="Escobar J."/>
            <person name="Flowers D."/>
            <person name="Fotopulos D."/>
            <person name="Garcia C."/>
            <person name="Georgescu A.M."/>
            <person name="Glavina T."/>
            <person name="Gomez M."/>
            <person name="Gonzales E."/>
            <person name="Groza M."/>
            <person name="Hammon N."/>
            <person name="Hawkins T."/>
            <person name="Haydu L."/>
            <person name="Ho I."/>
            <person name="Huang W."/>
            <person name="Israni S."/>
            <person name="Jett J."/>
            <person name="Kadner K."/>
            <person name="Kimball H."/>
            <person name="Kobayashi A."/>
            <person name="Larionov V."/>
            <person name="Leem S.-H."/>
            <person name="Lopez F."/>
            <person name="Lou Y."/>
            <person name="Lowry S."/>
            <person name="Malfatti S."/>
            <person name="Martinez D."/>
            <person name="McCready P.M."/>
            <person name="Medina C."/>
            <person name="Morgan J."/>
            <person name="Nelson K."/>
            <person name="Nolan M."/>
            <person name="Ovcharenko I."/>
            <person name="Pitluck S."/>
            <person name="Pollard M."/>
            <person name="Popkie A.P."/>
            <person name="Predki P."/>
            <person name="Quan G."/>
            <person name="Ramirez L."/>
            <person name="Rash S."/>
            <person name="Retterer J."/>
            <person name="Rodriguez A."/>
            <person name="Rogers S."/>
            <person name="Salamov A."/>
            <person name="Salazar A."/>
            <person name="She X."/>
            <person name="Smith D."/>
            <person name="Slezak T."/>
            <person name="Solovyev V."/>
            <person name="Thayer N."/>
            <person name="Tice H."/>
            <person name="Tsai M."/>
            <person name="Ustaszewska A."/>
            <person name="Vo N."/>
            <person name="Wagner M."/>
            <person name="Wheeler J."/>
            <person name="Wu K."/>
            <person name="Xie G."/>
            <person name="Yang J."/>
            <person name="Dubchak I."/>
            <person name="Furey T.S."/>
            <person name="DeJong P."/>
            <person name="Dickson M."/>
            <person name="Gordon D."/>
            <person name="Eichler E.E."/>
            <person name="Pennacchio L.A."/>
            <person name="Richardson P."/>
            <person name="Stubbs L."/>
            <person name="Rokhsar D.S."/>
            <person name="Myers R.M."/>
            <person name="Rubin E.M."/>
            <person name="Lucas S.M."/>
        </authorList>
    </citation>
    <scope>NUCLEOTIDE SEQUENCE [LARGE SCALE GENOMIC DNA]</scope>
</reference>
<reference key="3">
    <citation type="journal article" date="2004" name="Genome Res.">
        <title>The status, quality, and expansion of the NIH full-length cDNA project: the Mammalian Gene Collection (MGC).</title>
        <authorList>
            <consortium name="The MGC Project Team"/>
        </authorList>
    </citation>
    <scope>NUCLEOTIDE SEQUENCE [LARGE SCALE MRNA] (ISOFORM 3)</scope>
    <source>
        <tissue>Heart</tissue>
        <tissue>Lung</tissue>
    </source>
</reference>
<reference key="4">
    <citation type="journal article" date="2017" name="Nat. Struct. Mol. Biol.">
        <title>Site-specific mapping of the human SUMO proteome reveals co-modification with phosphorylation.</title>
        <authorList>
            <person name="Hendriks I.A."/>
            <person name="Lyon D."/>
            <person name="Young C."/>
            <person name="Jensen L.J."/>
            <person name="Vertegaal A.C."/>
            <person name="Nielsen M.L."/>
        </authorList>
    </citation>
    <scope>SUMOYLATION [LARGE SCALE ANALYSIS] AT LYS-137; LYS-554; LYS-579 AND LYS-791</scope>
    <scope>IDENTIFICATION BY MASS SPECTROMETRY [LARGE SCALE ANALYSIS]</scope>
</reference>
<proteinExistence type="evidence at protein level"/>
<organism>
    <name type="scientific">Homo sapiens</name>
    <name type="common">Human</name>
    <dbReference type="NCBI Taxonomy" id="9606"/>
    <lineage>
        <taxon>Eukaryota</taxon>
        <taxon>Metazoa</taxon>
        <taxon>Chordata</taxon>
        <taxon>Craniata</taxon>
        <taxon>Vertebrata</taxon>
        <taxon>Euteleostomi</taxon>
        <taxon>Mammalia</taxon>
        <taxon>Eutheria</taxon>
        <taxon>Euarchontoglires</taxon>
        <taxon>Primates</taxon>
        <taxon>Haplorrhini</taxon>
        <taxon>Catarrhini</taxon>
        <taxon>Hominidae</taxon>
        <taxon>Homo</taxon>
    </lineage>
</organism>
<gene>
    <name type="primary">ZNF841</name>
</gene>
<dbReference type="EMBL" id="AK093512">
    <property type="protein sequence ID" value="BAC04190.1"/>
    <property type="status" value="ALT_INIT"/>
    <property type="molecule type" value="mRNA"/>
</dbReference>
<dbReference type="EMBL" id="AK129938">
    <property type="protein sequence ID" value="BAC85253.1"/>
    <property type="molecule type" value="mRNA"/>
</dbReference>
<dbReference type="EMBL" id="AK131334">
    <property type="protein sequence ID" value="BAD18493.1"/>
    <property type="status" value="ALT_INIT"/>
    <property type="molecule type" value="mRNA"/>
</dbReference>
<dbReference type="EMBL" id="AK131409">
    <property type="protein sequence ID" value="BAD18556.1"/>
    <property type="molecule type" value="mRNA"/>
</dbReference>
<dbReference type="EMBL" id="AC011468">
    <property type="status" value="NOT_ANNOTATED_CDS"/>
    <property type="molecule type" value="Genomic_DNA"/>
</dbReference>
<dbReference type="EMBL" id="BC136254">
    <property type="protein sequence ID" value="AAI36255.1"/>
    <property type="molecule type" value="mRNA"/>
</dbReference>
<dbReference type="CCDS" id="CCDS46161.1">
    <molecule id="Q6ZN19-3"/>
</dbReference>
<dbReference type="CCDS" id="CCDS82388.1">
    <molecule id="Q6ZN19-1"/>
</dbReference>
<dbReference type="RefSeq" id="NP_001129971.1">
    <molecule id="Q6ZN19-3"/>
    <property type="nucleotide sequence ID" value="NM_001136499.2"/>
</dbReference>
<dbReference type="RefSeq" id="NP_001308278.1">
    <molecule id="Q6ZN19-1"/>
    <property type="nucleotide sequence ID" value="NM_001321349.2"/>
</dbReference>
<dbReference type="RefSeq" id="NP_001339227.1">
    <molecule id="Q6ZN19-3"/>
    <property type="nucleotide sequence ID" value="NM_001352298.2"/>
</dbReference>
<dbReference type="RefSeq" id="NP_001356755.1">
    <molecule id="Q6ZN19-3"/>
    <property type="nucleotide sequence ID" value="NM_001369826.1"/>
</dbReference>
<dbReference type="RefSeq" id="NP_001356756.1">
    <molecule id="Q6ZN19-3"/>
    <property type="nucleotide sequence ID" value="NM_001369827.1"/>
</dbReference>
<dbReference type="RefSeq" id="NP_001356757.1">
    <molecule id="Q6ZN19-3"/>
    <property type="nucleotide sequence ID" value="NM_001369828.1"/>
</dbReference>
<dbReference type="RefSeq" id="NP_001356759.1">
    <molecule id="Q6ZN19-1"/>
    <property type="nucleotide sequence ID" value="NM_001369830.1"/>
</dbReference>
<dbReference type="RefSeq" id="XP_016882145.1">
    <property type="nucleotide sequence ID" value="XM_017026656.1"/>
</dbReference>
<dbReference type="RefSeq" id="XP_016882146.1">
    <property type="nucleotide sequence ID" value="XM_017026657.1"/>
</dbReference>
<dbReference type="RefSeq" id="XP_047294609.1">
    <molecule id="Q6ZN19-3"/>
    <property type="nucleotide sequence ID" value="XM_047438653.1"/>
</dbReference>
<dbReference type="RefSeq" id="XP_047294610.1">
    <molecule id="Q6ZN19-3"/>
    <property type="nucleotide sequence ID" value="XM_047438654.1"/>
</dbReference>
<dbReference type="RefSeq" id="XP_047294611.1">
    <molecule id="Q6ZN19-3"/>
    <property type="nucleotide sequence ID" value="XM_047438655.1"/>
</dbReference>
<dbReference type="RefSeq" id="XP_054176629.1">
    <molecule id="Q6ZN19-3"/>
    <property type="nucleotide sequence ID" value="XM_054320654.1"/>
</dbReference>
<dbReference type="RefSeq" id="XP_054176630.1">
    <molecule id="Q6ZN19-3"/>
    <property type="nucleotide sequence ID" value="XM_054320655.1"/>
</dbReference>
<dbReference type="RefSeq" id="XP_054176631.1">
    <molecule id="Q6ZN19-3"/>
    <property type="nucleotide sequence ID" value="XM_054320656.1"/>
</dbReference>
<dbReference type="SMR" id="Q6ZN19"/>
<dbReference type="BioGRID" id="129850">
    <property type="interactions" value="4"/>
</dbReference>
<dbReference type="FunCoup" id="Q6ZN19">
    <property type="interactions" value="41"/>
</dbReference>
<dbReference type="IntAct" id="Q6ZN19">
    <property type="interactions" value="3"/>
</dbReference>
<dbReference type="STRING" id="9606.ENSP00000470746"/>
<dbReference type="iPTMnet" id="Q6ZN19"/>
<dbReference type="PhosphoSitePlus" id="Q6ZN19"/>
<dbReference type="BioMuta" id="ZNF841"/>
<dbReference type="DMDM" id="74758703"/>
<dbReference type="jPOST" id="Q6ZN19"/>
<dbReference type="MassIVE" id="Q6ZN19"/>
<dbReference type="PaxDb" id="9606-ENSP00000470746"/>
<dbReference type="PeptideAtlas" id="Q6ZN19"/>
<dbReference type="ProteomicsDB" id="67964">
    <molecule id="Q6ZN19-1"/>
</dbReference>
<dbReference type="ProteomicsDB" id="67965">
    <molecule id="Q6ZN19-2"/>
</dbReference>
<dbReference type="ProteomicsDB" id="67966">
    <molecule id="Q6ZN19-3"/>
</dbReference>
<dbReference type="Antibodypedia" id="66958">
    <property type="antibodies" value="52 antibodies from 11 providers"/>
</dbReference>
<dbReference type="DNASU" id="284371"/>
<dbReference type="Ensembl" id="ENST00000389534.8">
    <molecule id="Q6ZN19-3"/>
    <property type="protein sequence ID" value="ENSP00000374185.4"/>
    <property type="gene ID" value="ENSG00000197608.12"/>
</dbReference>
<dbReference type="Ensembl" id="ENST00000426391.6">
    <molecule id="Q6ZN19-1"/>
    <property type="protein sequence ID" value="ENSP00000415453.2"/>
    <property type="gene ID" value="ENSG00000197608.12"/>
</dbReference>
<dbReference type="Ensembl" id="ENST00000594295.5">
    <molecule id="Q6ZN19-3"/>
    <property type="protein sequence ID" value="ENSP00000470746.1"/>
    <property type="gene ID" value="ENSG00000197608.12"/>
</dbReference>
<dbReference type="Ensembl" id="ENST00000594440.6">
    <molecule id="Q6ZN19-3"/>
    <property type="protein sequence ID" value="ENSP00000470100.2"/>
    <property type="gene ID" value="ENSG00000197608.12"/>
</dbReference>
<dbReference type="GeneID" id="284371"/>
<dbReference type="KEGG" id="hsa:284371"/>
<dbReference type="MANE-Select" id="ENST00000594440.6">
    <molecule id="Q6ZN19-3"/>
    <property type="protein sequence ID" value="ENSP00000470100.2"/>
    <property type="RefSeq nucleotide sequence ID" value="NM_001136499.2"/>
    <property type="RefSeq protein sequence ID" value="NP_001129971.1"/>
</dbReference>
<dbReference type="UCSC" id="uc002pyl.1">
    <molecule id="Q6ZN19-1"/>
    <property type="organism name" value="human"/>
</dbReference>
<dbReference type="AGR" id="HGNC:27611"/>
<dbReference type="CTD" id="284371"/>
<dbReference type="GeneCards" id="ZNF841"/>
<dbReference type="HGNC" id="HGNC:27611">
    <property type="gene designation" value="ZNF841"/>
</dbReference>
<dbReference type="HPA" id="ENSG00000197608">
    <property type="expression patterns" value="Low tissue specificity"/>
</dbReference>
<dbReference type="neXtProt" id="NX_Q6ZN19"/>
<dbReference type="OpenTargets" id="ENSG00000197608"/>
<dbReference type="PharmGKB" id="PA162410839"/>
<dbReference type="VEuPathDB" id="HostDB:ENSG00000197608"/>
<dbReference type="eggNOG" id="KOG1721">
    <property type="taxonomic scope" value="Eukaryota"/>
</dbReference>
<dbReference type="GeneTree" id="ENSGT00940000164553"/>
<dbReference type="HOGENOM" id="CLU_002678_17_0_1"/>
<dbReference type="InParanoid" id="Q6ZN19"/>
<dbReference type="OMA" id="NCKEVPM"/>
<dbReference type="OrthoDB" id="9411774at2759"/>
<dbReference type="PAN-GO" id="Q6ZN19">
    <property type="GO annotations" value="4 GO annotations based on evolutionary models"/>
</dbReference>
<dbReference type="PhylomeDB" id="Q6ZN19"/>
<dbReference type="TreeFam" id="TF343410"/>
<dbReference type="PathwayCommons" id="Q6ZN19"/>
<dbReference type="SignaLink" id="Q6ZN19"/>
<dbReference type="BioGRID-ORCS" id="284371">
    <property type="hits" value="8 hits in 1167 CRISPR screens"/>
</dbReference>
<dbReference type="ChiTaRS" id="ZNF841">
    <property type="organism name" value="human"/>
</dbReference>
<dbReference type="GenomeRNAi" id="284371"/>
<dbReference type="Pharos" id="Q6ZN19">
    <property type="development level" value="Tdark"/>
</dbReference>
<dbReference type="PRO" id="PR:Q6ZN19"/>
<dbReference type="Proteomes" id="UP000005640">
    <property type="component" value="Chromosome 19"/>
</dbReference>
<dbReference type="RNAct" id="Q6ZN19">
    <property type="molecule type" value="protein"/>
</dbReference>
<dbReference type="Bgee" id="ENSG00000197608">
    <property type="expression patterns" value="Expressed in calcaneal tendon and 102 other cell types or tissues"/>
</dbReference>
<dbReference type="ExpressionAtlas" id="Q6ZN19">
    <property type="expression patterns" value="baseline and differential"/>
</dbReference>
<dbReference type="GO" id="GO:0005634">
    <property type="term" value="C:nucleus"/>
    <property type="evidence" value="ECO:0000318"/>
    <property type="project" value="GO_Central"/>
</dbReference>
<dbReference type="GO" id="GO:0003677">
    <property type="term" value="F:DNA binding"/>
    <property type="evidence" value="ECO:0007669"/>
    <property type="project" value="UniProtKB-KW"/>
</dbReference>
<dbReference type="GO" id="GO:0008270">
    <property type="term" value="F:zinc ion binding"/>
    <property type="evidence" value="ECO:0007669"/>
    <property type="project" value="UniProtKB-KW"/>
</dbReference>
<dbReference type="GO" id="GO:0006357">
    <property type="term" value="P:regulation of transcription by RNA polymerase II"/>
    <property type="evidence" value="ECO:0000318"/>
    <property type="project" value="GO_Central"/>
</dbReference>
<dbReference type="FunFam" id="3.30.160.60:FF:004137">
    <property type="match status" value="1"/>
</dbReference>
<dbReference type="FunFam" id="3.30.160.60:FF:000247">
    <property type="entry name" value="Zinc finger protein 236"/>
    <property type="match status" value="1"/>
</dbReference>
<dbReference type="FunFam" id="3.30.160.60:FF:002343">
    <property type="entry name" value="Zinc finger protein 33A"/>
    <property type="match status" value="1"/>
</dbReference>
<dbReference type="FunFam" id="3.30.160.60:FF:000133">
    <property type="entry name" value="Zinc finger protein 347"/>
    <property type="match status" value="1"/>
</dbReference>
<dbReference type="FunFam" id="3.30.160.60:FF:002402">
    <property type="entry name" value="Zinc finger protein 347"/>
    <property type="match status" value="1"/>
</dbReference>
<dbReference type="FunFam" id="3.30.160.60:FF:000135">
    <property type="entry name" value="Zinc finger protein 358"/>
    <property type="match status" value="1"/>
</dbReference>
<dbReference type="FunFam" id="3.30.160.60:FF:000016">
    <property type="entry name" value="zinc finger protein 37 homolog"/>
    <property type="match status" value="2"/>
</dbReference>
<dbReference type="FunFam" id="3.30.160.60:FF:002090">
    <property type="entry name" value="Zinc finger protein 473"/>
    <property type="match status" value="1"/>
</dbReference>
<dbReference type="FunFam" id="3.30.160.60:FF:002254">
    <property type="entry name" value="Zinc finger protein 540"/>
    <property type="match status" value="1"/>
</dbReference>
<dbReference type="FunFam" id="3.30.160.60:FF:000052">
    <property type="entry name" value="zinc finger protein 546 isoform X1"/>
    <property type="match status" value="1"/>
</dbReference>
<dbReference type="FunFam" id="3.30.160.60:FF:000281">
    <property type="entry name" value="Zinc finger protein 558 isoform X1"/>
    <property type="match status" value="1"/>
</dbReference>
<dbReference type="FunFam" id="3.30.160.60:FF:000015">
    <property type="entry name" value="Zinc finger protein 569"/>
    <property type="match status" value="1"/>
</dbReference>
<dbReference type="FunFam" id="3.30.160.60:FF:000149">
    <property type="entry name" value="Zinc finger protein 569"/>
    <property type="match status" value="1"/>
</dbReference>
<dbReference type="FunFam" id="3.30.160.60:FF:000454">
    <property type="entry name" value="Zinc finger protein 624"/>
    <property type="match status" value="2"/>
</dbReference>
<dbReference type="FunFam" id="3.30.160.60:FF:000846">
    <property type="entry name" value="Zinc finger protein 624"/>
    <property type="match status" value="1"/>
</dbReference>
<dbReference type="FunFam" id="3.30.160.60:FF:000394">
    <property type="entry name" value="Zinc finger protein 836"/>
    <property type="match status" value="4"/>
</dbReference>
<dbReference type="FunFam" id="3.30.160.60:FF:001631">
    <property type="entry name" value="Zinc finger protein 836"/>
    <property type="match status" value="2"/>
</dbReference>
<dbReference type="FunFam" id="3.30.160.60:FF:002293">
    <property type="entry name" value="Zinc finger protein 836"/>
    <property type="match status" value="1"/>
</dbReference>
<dbReference type="Gene3D" id="3.30.160.60">
    <property type="entry name" value="Classic Zinc Finger"/>
    <property type="match status" value="23"/>
</dbReference>
<dbReference type="InterPro" id="IPR050331">
    <property type="entry name" value="Zinc_finger"/>
</dbReference>
<dbReference type="InterPro" id="IPR036236">
    <property type="entry name" value="Znf_C2H2_sf"/>
</dbReference>
<dbReference type="InterPro" id="IPR013087">
    <property type="entry name" value="Znf_C2H2_type"/>
</dbReference>
<dbReference type="PANTHER" id="PTHR16515">
    <property type="entry name" value="PR DOMAIN ZINC FINGER PROTEIN"/>
    <property type="match status" value="1"/>
</dbReference>
<dbReference type="PANTHER" id="PTHR16515:SF57">
    <property type="entry name" value="ZINC FINGER PROTEIN 154-LIKE"/>
    <property type="match status" value="1"/>
</dbReference>
<dbReference type="Pfam" id="PF00096">
    <property type="entry name" value="zf-C2H2"/>
    <property type="match status" value="20"/>
</dbReference>
<dbReference type="Pfam" id="PF13912">
    <property type="entry name" value="zf-C2H2_6"/>
    <property type="match status" value="1"/>
</dbReference>
<dbReference type="SMART" id="SM00355">
    <property type="entry name" value="ZnF_C2H2"/>
    <property type="match status" value="22"/>
</dbReference>
<dbReference type="SUPFAM" id="SSF57667">
    <property type="entry name" value="beta-beta-alpha zinc fingers"/>
    <property type="match status" value="12"/>
</dbReference>
<dbReference type="PROSITE" id="PS00028">
    <property type="entry name" value="ZINC_FINGER_C2H2_1"/>
    <property type="match status" value="20"/>
</dbReference>
<dbReference type="PROSITE" id="PS50157">
    <property type="entry name" value="ZINC_FINGER_C2H2_2"/>
    <property type="match status" value="23"/>
</dbReference>
<evidence type="ECO:0000250" key="1"/>
<evidence type="ECO:0000255" key="2">
    <source>
        <dbReference type="PROSITE-ProRule" id="PRU00042"/>
    </source>
</evidence>
<evidence type="ECO:0000303" key="3">
    <source>
    </source>
</evidence>
<evidence type="ECO:0000303" key="4">
    <source>
    </source>
</evidence>
<evidence type="ECO:0000305" key="5"/>
<evidence type="ECO:0007744" key="6">
    <source>
    </source>
</evidence>
<keyword id="KW-0025">Alternative splicing</keyword>
<keyword id="KW-0238">DNA-binding</keyword>
<keyword id="KW-1017">Isopeptide bond</keyword>
<keyword id="KW-0479">Metal-binding</keyword>
<keyword id="KW-0539">Nucleus</keyword>
<keyword id="KW-1267">Proteomics identification</keyword>
<keyword id="KW-1185">Reference proteome</keyword>
<keyword id="KW-0677">Repeat</keyword>
<keyword id="KW-0804">Transcription</keyword>
<keyword id="KW-0805">Transcription regulation</keyword>
<keyword id="KW-0832">Ubl conjugation</keyword>
<keyword id="KW-0862">Zinc</keyword>
<keyword id="KW-0863">Zinc-finger</keyword>
<protein>
    <recommendedName>
        <fullName>Zinc finger protein 841</fullName>
    </recommendedName>
</protein>
<name>ZN841_HUMAN</name>
<sequence>MLEGHESYDTENFYFREIRKNLQEVDFQWKDGEINYKEGPMTHKNNLTGQRVRHSQGDVENKHMENQLILRFQSGLGELQKFQTAEKIYGCNQIERTVNNCFLASPLQRIFPGVQTNISRKYGNDFLQLSLPTQDEKTHIREKPYIGNECGKAFRVSSSLINHQMIHTTEKPYRCNESGKAFHRGSLLTVHQIVHTRGKPYQCDVCGRIFRQNSDLVNHRRSHTGDKPYICNECGKSFSKSSHLAVHQRIHTGEKPYKCNRCGKCFSQSSSLATHQTVHTGDKPYKCNECGKTFKRNSSLTAHHIIHAGKKPYTCDVCGKVFYQNSQLVRHQIIHTGETPYKCNECGKVFFQRSRLAGHRRIHTGEKPYKCNECGKVFSQHSHLAVHQRVHTGEKPYKCNECGKAFNWGSLLTVHQRIHTGEKPYKCNVCGKVFNYGGYLSVHMRCHTGEKPLHCNKCGMVFTYYSCLARHQRMHTGEKPYKCNVCGKVFIDSGNLSIHRRSHTGEKPFQCNECGKVFSYYSCLARHRKIHTGEKPYKCNDCGKAYTQRSSLTKHLVIHTGENPYHCNEFGEAFIQSSKLARYHRNPTGEKPHKCSECGRTFSHKTSLVYHQRRHTGEMPYKCIECGKVFNSTTTLARHRRIHTGEKPYKCNECGKVFRYRSGLARHWSIHTGEKPYKCNECGKAFRVRSILLNHQMMHTGEKPYKCNECGKAFIERSNLVYHQRNHTGEKPYKCMECGKAFGRRSCLTKHQRIHSSEKPYKCNECGKSYISRSGLTKHQIKHAGENLTTKLNVERPLDVVLTSGIPK</sequence>
<comment type="function">
    <text evidence="1">May be involved in transcriptional regulation.</text>
</comment>
<comment type="subcellular location">
    <subcellularLocation>
        <location evidence="1">Nucleus</location>
    </subcellularLocation>
</comment>
<comment type="alternative products">
    <event type="alternative splicing"/>
    <isoform>
        <id>Q6ZN19-1</id>
        <name>1</name>
        <sequence type="displayed"/>
    </isoform>
    <isoform>
        <id>Q6ZN19-2</id>
        <name>2</name>
        <sequence type="described" ref="VSP_033755"/>
    </isoform>
    <isoform>
        <id>Q6ZN19-3</id>
        <name>3</name>
        <sequence type="described" ref="VSP_040752"/>
    </isoform>
</comment>
<comment type="similarity">
    <text evidence="5">Belongs to the krueppel C2H2-type zinc-finger protein family.</text>
</comment>
<comment type="sequence caution" evidence="5">
    <conflict type="erroneous initiation">
        <sequence resource="EMBL-CDS" id="BAC04190"/>
    </conflict>
    <text>Truncated N-terminus.</text>
</comment>
<comment type="sequence caution" evidence="5">
    <conflict type="erroneous initiation">
        <sequence resource="EMBL-CDS" id="BAD18493"/>
    </conflict>
    <text>Truncated N-terminus.</text>
</comment>
<accession>Q6ZN19</accession>
<accession>B9EG58</accession>
<accession>Q6ZN82</accession>
<accession>Q6ZP71</accession>
<accession>Q8N9U7</accession>
<feature type="chain" id="PRO_0000334677" description="Zinc finger protein 841">
    <location>
        <begin position="1"/>
        <end position="808"/>
    </location>
</feature>
<feature type="zinc finger region" description="C2H2-type 1; degenerate" evidence="2">
    <location>
        <begin position="145"/>
        <end position="167"/>
    </location>
</feature>
<feature type="zinc finger region" description="C2H2-type 2; degenerate" evidence="2">
    <location>
        <begin position="173"/>
        <end position="195"/>
    </location>
</feature>
<feature type="zinc finger region" description="C2H2-type 3" evidence="2">
    <location>
        <begin position="201"/>
        <end position="223"/>
    </location>
</feature>
<feature type="zinc finger region" description="C2H2-type 4" evidence="2">
    <location>
        <begin position="229"/>
        <end position="251"/>
    </location>
</feature>
<feature type="zinc finger region" description="C2H2-type 5" evidence="2">
    <location>
        <begin position="257"/>
        <end position="279"/>
    </location>
</feature>
<feature type="zinc finger region" description="C2H2-type 6" evidence="2">
    <location>
        <begin position="285"/>
        <end position="307"/>
    </location>
</feature>
<feature type="zinc finger region" description="C2H2-type 7" evidence="2">
    <location>
        <begin position="313"/>
        <end position="335"/>
    </location>
</feature>
<feature type="zinc finger region" description="C2H2-type 8" evidence="2">
    <location>
        <begin position="341"/>
        <end position="363"/>
    </location>
</feature>
<feature type="zinc finger region" description="C2H2-type 9" evidence="2">
    <location>
        <begin position="369"/>
        <end position="391"/>
    </location>
</feature>
<feature type="zinc finger region" description="C2H2-type 10" evidence="2">
    <location>
        <begin position="397"/>
        <end position="419"/>
    </location>
</feature>
<feature type="zinc finger region" description="C2H2-type 11" evidence="2">
    <location>
        <begin position="425"/>
        <end position="447"/>
    </location>
</feature>
<feature type="zinc finger region" description="C2H2-type 12" evidence="2">
    <location>
        <begin position="453"/>
        <end position="475"/>
    </location>
</feature>
<feature type="zinc finger region" description="C2H2-type 13" evidence="2">
    <location>
        <begin position="481"/>
        <end position="503"/>
    </location>
</feature>
<feature type="zinc finger region" description="C2H2-type 14" evidence="2">
    <location>
        <begin position="509"/>
        <end position="531"/>
    </location>
</feature>
<feature type="zinc finger region" description="C2H2-type 15" evidence="2">
    <location>
        <begin position="537"/>
        <end position="559"/>
    </location>
</feature>
<feature type="zinc finger region" description="C2H2-type 16; degenerate" evidence="2">
    <location>
        <begin position="565"/>
        <end position="587"/>
    </location>
</feature>
<feature type="zinc finger region" description="C2H2-type 17" evidence="2">
    <location>
        <begin position="593"/>
        <end position="615"/>
    </location>
</feature>
<feature type="zinc finger region" description="C2H2-type 18" evidence="2">
    <location>
        <begin position="621"/>
        <end position="643"/>
    </location>
</feature>
<feature type="zinc finger region" description="C2H2-type 19" evidence="2">
    <location>
        <begin position="649"/>
        <end position="671"/>
    </location>
</feature>
<feature type="zinc finger region" description="C2H2-type 20" evidence="2">
    <location>
        <begin position="677"/>
        <end position="699"/>
    </location>
</feature>
<feature type="zinc finger region" description="C2H2-type 21" evidence="2">
    <location>
        <begin position="705"/>
        <end position="727"/>
    </location>
</feature>
<feature type="zinc finger region" description="C2H2-type 22" evidence="2">
    <location>
        <begin position="733"/>
        <end position="755"/>
    </location>
</feature>
<feature type="zinc finger region" description="C2H2-type 23" evidence="2">
    <location>
        <begin position="761"/>
        <end position="783"/>
    </location>
</feature>
<feature type="cross-link" description="Glycyl lysine isopeptide (Lys-Gly) (interchain with G-Cter in SUMO2)" evidence="6">
    <location>
        <position position="137"/>
    </location>
</feature>
<feature type="cross-link" description="Glycyl lysine isopeptide (Lys-Gly) (interchain with G-Cter in SUMO2)" evidence="6">
    <location>
        <position position="554"/>
    </location>
</feature>
<feature type="cross-link" description="Glycyl lysine isopeptide (Lys-Gly) (interchain with G-Cter in SUMO2)" evidence="6">
    <location>
        <position position="579"/>
    </location>
</feature>
<feature type="cross-link" description="Glycyl lysine isopeptide (Lys-Gly) (interchain with G-Cter in SUMO2)" evidence="6">
    <location>
        <position position="791"/>
    </location>
</feature>
<feature type="splice variant" id="VSP_040752" description="In isoform 3." evidence="4">
    <original>M</original>
    <variation>MALPQGSLTFRDVAVEFSQEEWKCLDPVQKALYRDVMLENYRNLGFLGLCLPDLNIISMLEQGKEPWTVVSQVKIARNPNCGECMKGVITGISPKCVIKELPPIQNSNTGEKFQAVM</variation>
    <location>
        <position position="1"/>
    </location>
</feature>
<feature type="splice variant" id="VSP_033755" description="In isoform 2." evidence="3">
    <location>
        <begin position="340"/>
        <end position="647"/>
    </location>
</feature>
<feature type="sequence conflict" description="In Ref. 1; BAC04190." evidence="5" ref="1">
    <original>L</original>
    <variation>P</variation>
    <location>
        <position position="748"/>
    </location>
</feature>
<feature type="sequence conflict" description="In Ref. 1; BAC85253." evidence="5" ref="1">
    <original>K</original>
    <variation>N</variation>
    <location>
        <position position="778"/>
    </location>
</feature>